<comment type="function">
    <text evidence="1">Associates with the EF-Tu.GDP complex and induces the exchange of GDP to GTP. It remains bound to the aminoacyl-tRNA.EF-Tu.GTP complex up to the GTP hydrolysis stage on the ribosome.</text>
</comment>
<comment type="subcellular location">
    <subcellularLocation>
        <location evidence="1">Cytoplasm</location>
    </subcellularLocation>
</comment>
<comment type="similarity">
    <text evidence="1">Belongs to the EF-Ts family.</text>
</comment>
<comment type="sequence caution" evidence="2">
    <conflict type="erroneous initiation">
        <sequence resource="EMBL-CDS" id="CAG21301"/>
    </conflict>
</comment>
<evidence type="ECO:0000255" key="1">
    <source>
        <dbReference type="HAMAP-Rule" id="MF_00050"/>
    </source>
</evidence>
<evidence type="ECO:0000305" key="2"/>
<sequence length="284" mass="30194">MATVTAALVKELRERTAAGMMDCKKALVEADGDIELAIDNMRKSGAAKAAKKSGNIAAEGTIIIKEVDGIAAILEVNCQTDFVAKDASFLAFANEVADAALAGRVEVAELQAAFEEKRIALVTKIGENISIRRVEFIEGAQIGSYRHGDRIGVVVVVVASDADQETIKQVAMHVAASKPEFVTPEDVPADVVAKEKQIQIDIAIQSGKPAEIAEKMVVGRMKKFTGEVSLTGQAFIMDPAQTVGQMLKAKGATVTNFIRFEVGEGIEKAKEMSFAEEVAAVQKG</sequence>
<protein>
    <recommendedName>
        <fullName evidence="1">Elongation factor Ts</fullName>
        <shortName evidence="1">EF-Ts</shortName>
    </recommendedName>
</protein>
<proteinExistence type="inferred from homology"/>
<name>EFTS_PHOPR</name>
<accession>Q6LN25</accession>
<keyword id="KW-0963">Cytoplasm</keyword>
<keyword id="KW-0251">Elongation factor</keyword>
<keyword id="KW-0648">Protein biosynthesis</keyword>
<keyword id="KW-1185">Reference proteome</keyword>
<feature type="chain" id="PRO_0000161170" description="Elongation factor Ts">
    <location>
        <begin position="1"/>
        <end position="284"/>
    </location>
</feature>
<feature type="region of interest" description="Involved in Mg(2+) ion dislocation from EF-Tu" evidence="1">
    <location>
        <begin position="80"/>
        <end position="83"/>
    </location>
</feature>
<gene>
    <name evidence="1" type="primary">tsf</name>
    <name type="ordered locus">PBPRA2967</name>
</gene>
<reference key="1">
    <citation type="journal article" date="2005" name="Science">
        <title>Life at depth: Photobacterium profundum genome sequence and expression analysis.</title>
        <authorList>
            <person name="Vezzi A."/>
            <person name="Campanaro S."/>
            <person name="D'Angelo M."/>
            <person name="Simonato F."/>
            <person name="Vitulo N."/>
            <person name="Lauro F.M."/>
            <person name="Cestaro A."/>
            <person name="Malacrida G."/>
            <person name="Simionati B."/>
            <person name="Cannata N."/>
            <person name="Romualdi C."/>
            <person name="Bartlett D.H."/>
            <person name="Valle G."/>
        </authorList>
    </citation>
    <scope>NUCLEOTIDE SEQUENCE [LARGE SCALE GENOMIC DNA]</scope>
    <source>
        <strain>ATCC BAA-1253 / SS9</strain>
    </source>
</reference>
<dbReference type="EMBL" id="CR378672">
    <property type="protein sequence ID" value="CAG21301.1"/>
    <property type="status" value="ALT_INIT"/>
    <property type="molecule type" value="Genomic_DNA"/>
</dbReference>
<dbReference type="RefSeq" id="WP_011219568.1">
    <property type="nucleotide sequence ID" value="NC_006370.1"/>
</dbReference>
<dbReference type="SMR" id="Q6LN25"/>
<dbReference type="STRING" id="298386.PBPRA2967"/>
<dbReference type="KEGG" id="ppr:PBPRA2967"/>
<dbReference type="eggNOG" id="COG0264">
    <property type="taxonomic scope" value="Bacteria"/>
</dbReference>
<dbReference type="HOGENOM" id="CLU_047155_0_2_6"/>
<dbReference type="Proteomes" id="UP000000593">
    <property type="component" value="Chromosome 1"/>
</dbReference>
<dbReference type="GO" id="GO:0005737">
    <property type="term" value="C:cytoplasm"/>
    <property type="evidence" value="ECO:0007669"/>
    <property type="project" value="UniProtKB-SubCell"/>
</dbReference>
<dbReference type="GO" id="GO:0003746">
    <property type="term" value="F:translation elongation factor activity"/>
    <property type="evidence" value="ECO:0007669"/>
    <property type="project" value="UniProtKB-UniRule"/>
</dbReference>
<dbReference type="CDD" id="cd14275">
    <property type="entry name" value="UBA_EF-Ts"/>
    <property type="match status" value="1"/>
</dbReference>
<dbReference type="FunFam" id="1.10.286.20:FF:000001">
    <property type="entry name" value="Elongation factor Ts"/>
    <property type="match status" value="1"/>
</dbReference>
<dbReference type="FunFam" id="1.10.8.10:FF:000001">
    <property type="entry name" value="Elongation factor Ts"/>
    <property type="match status" value="1"/>
</dbReference>
<dbReference type="FunFam" id="3.30.479.20:FF:000001">
    <property type="entry name" value="Elongation factor Ts"/>
    <property type="match status" value="1"/>
</dbReference>
<dbReference type="Gene3D" id="1.10.286.20">
    <property type="match status" value="1"/>
</dbReference>
<dbReference type="Gene3D" id="1.10.8.10">
    <property type="entry name" value="DNA helicase RuvA subunit, C-terminal domain"/>
    <property type="match status" value="1"/>
</dbReference>
<dbReference type="Gene3D" id="3.30.479.20">
    <property type="entry name" value="Elongation factor Ts, dimerisation domain"/>
    <property type="match status" value="2"/>
</dbReference>
<dbReference type="HAMAP" id="MF_00050">
    <property type="entry name" value="EF_Ts"/>
    <property type="match status" value="1"/>
</dbReference>
<dbReference type="InterPro" id="IPR036402">
    <property type="entry name" value="EF-Ts_dimer_sf"/>
</dbReference>
<dbReference type="InterPro" id="IPR001816">
    <property type="entry name" value="Transl_elong_EFTs/EF1B"/>
</dbReference>
<dbReference type="InterPro" id="IPR014039">
    <property type="entry name" value="Transl_elong_EFTs/EF1B_dimer"/>
</dbReference>
<dbReference type="InterPro" id="IPR018101">
    <property type="entry name" value="Transl_elong_Ts_CS"/>
</dbReference>
<dbReference type="InterPro" id="IPR009060">
    <property type="entry name" value="UBA-like_sf"/>
</dbReference>
<dbReference type="NCBIfam" id="TIGR00116">
    <property type="entry name" value="tsf"/>
    <property type="match status" value="1"/>
</dbReference>
<dbReference type="PANTHER" id="PTHR11741">
    <property type="entry name" value="ELONGATION FACTOR TS"/>
    <property type="match status" value="1"/>
</dbReference>
<dbReference type="PANTHER" id="PTHR11741:SF0">
    <property type="entry name" value="ELONGATION FACTOR TS, MITOCHONDRIAL"/>
    <property type="match status" value="1"/>
</dbReference>
<dbReference type="Pfam" id="PF00889">
    <property type="entry name" value="EF_TS"/>
    <property type="match status" value="1"/>
</dbReference>
<dbReference type="SUPFAM" id="SSF54713">
    <property type="entry name" value="Elongation factor Ts (EF-Ts), dimerisation domain"/>
    <property type="match status" value="2"/>
</dbReference>
<dbReference type="SUPFAM" id="SSF46934">
    <property type="entry name" value="UBA-like"/>
    <property type="match status" value="1"/>
</dbReference>
<dbReference type="PROSITE" id="PS01127">
    <property type="entry name" value="EF_TS_2"/>
    <property type="match status" value="1"/>
</dbReference>
<organism>
    <name type="scientific">Photobacterium profundum (strain SS9)</name>
    <dbReference type="NCBI Taxonomy" id="298386"/>
    <lineage>
        <taxon>Bacteria</taxon>
        <taxon>Pseudomonadati</taxon>
        <taxon>Pseudomonadota</taxon>
        <taxon>Gammaproteobacteria</taxon>
        <taxon>Vibrionales</taxon>
        <taxon>Vibrionaceae</taxon>
        <taxon>Photobacterium</taxon>
    </lineage>
</organism>